<feature type="chain" id="PRO_1000065255" description="UPF0294 protein YafD">
    <location>
        <begin position="1"/>
        <end position="266"/>
    </location>
</feature>
<comment type="subcellular location">
    <subcellularLocation>
        <location evidence="1">Cytoplasm</location>
    </subcellularLocation>
</comment>
<comment type="similarity">
    <text evidence="1">Belongs to the UPF0294 family.</text>
</comment>
<name>YAFD_SHIDS</name>
<reference key="1">
    <citation type="journal article" date="2005" name="Nucleic Acids Res.">
        <title>Genome dynamics and diversity of Shigella species, the etiologic agents of bacillary dysentery.</title>
        <authorList>
            <person name="Yang F."/>
            <person name="Yang J."/>
            <person name="Zhang X."/>
            <person name="Chen L."/>
            <person name="Jiang Y."/>
            <person name="Yan Y."/>
            <person name="Tang X."/>
            <person name="Wang J."/>
            <person name="Xiong Z."/>
            <person name="Dong J."/>
            <person name="Xue Y."/>
            <person name="Zhu Y."/>
            <person name="Xu X."/>
            <person name="Sun L."/>
            <person name="Chen S."/>
            <person name="Nie H."/>
            <person name="Peng J."/>
            <person name="Xu J."/>
            <person name="Wang Y."/>
            <person name="Yuan Z."/>
            <person name="Wen Y."/>
            <person name="Yao Z."/>
            <person name="Shen Y."/>
            <person name="Qiang B."/>
            <person name="Hou Y."/>
            <person name="Yu J."/>
            <person name="Jin Q."/>
        </authorList>
    </citation>
    <scope>NUCLEOTIDE SEQUENCE [LARGE SCALE GENOMIC DNA]</scope>
    <source>
        <strain>Sd197</strain>
    </source>
</reference>
<accession>Q32JQ4</accession>
<dbReference type="EMBL" id="CP000034">
    <property type="protein sequence ID" value="ABB60453.1"/>
    <property type="molecule type" value="Genomic_DNA"/>
</dbReference>
<dbReference type="RefSeq" id="WP_001230979.1">
    <property type="nucleotide sequence ID" value="NC_007606.1"/>
</dbReference>
<dbReference type="RefSeq" id="YP_401942.1">
    <property type="nucleotide sequence ID" value="NC_007606.1"/>
</dbReference>
<dbReference type="SMR" id="Q32JQ4"/>
<dbReference type="STRING" id="300267.SDY_0228"/>
<dbReference type="EnsemblBacteria" id="ABB60453">
    <property type="protein sequence ID" value="ABB60453"/>
    <property type="gene ID" value="SDY_0228"/>
</dbReference>
<dbReference type="KEGG" id="sdy:SDY_0228"/>
<dbReference type="PATRIC" id="fig|300267.13.peg.256"/>
<dbReference type="HOGENOM" id="CLU_083563_0_0_6"/>
<dbReference type="Proteomes" id="UP000002716">
    <property type="component" value="Chromosome"/>
</dbReference>
<dbReference type="GO" id="GO:0005737">
    <property type="term" value="C:cytoplasm"/>
    <property type="evidence" value="ECO:0007669"/>
    <property type="project" value="UniProtKB-SubCell"/>
</dbReference>
<dbReference type="GO" id="GO:0003824">
    <property type="term" value="F:catalytic activity"/>
    <property type="evidence" value="ECO:0007669"/>
    <property type="project" value="InterPro"/>
</dbReference>
<dbReference type="Gene3D" id="3.60.10.10">
    <property type="entry name" value="Endonuclease/exonuclease/phosphatase"/>
    <property type="match status" value="1"/>
</dbReference>
<dbReference type="HAMAP" id="MF_01119">
    <property type="entry name" value="UPF0294"/>
    <property type="match status" value="1"/>
</dbReference>
<dbReference type="InterPro" id="IPR036691">
    <property type="entry name" value="Endo/exonu/phosph_ase_sf"/>
</dbReference>
<dbReference type="InterPro" id="IPR005135">
    <property type="entry name" value="Endo/exonuclease/phosphatase"/>
</dbReference>
<dbReference type="InterPro" id="IPR022958">
    <property type="entry name" value="UPF0294"/>
</dbReference>
<dbReference type="NCBIfam" id="NF003839">
    <property type="entry name" value="PRK05421.1-1"/>
    <property type="match status" value="1"/>
</dbReference>
<dbReference type="NCBIfam" id="NF003840">
    <property type="entry name" value="PRK05421.1-2"/>
    <property type="match status" value="1"/>
</dbReference>
<dbReference type="NCBIfam" id="NF003841">
    <property type="entry name" value="PRK05421.1-3"/>
    <property type="match status" value="1"/>
</dbReference>
<dbReference type="NCBIfam" id="NF003842">
    <property type="entry name" value="PRK05421.1-4"/>
    <property type="match status" value="1"/>
</dbReference>
<dbReference type="Pfam" id="PF03372">
    <property type="entry name" value="Exo_endo_phos"/>
    <property type="match status" value="1"/>
</dbReference>
<dbReference type="SUPFAM" id="SSF56219">
    <property type="entry name" value="DNase I-like"/>
    <property type="match status" value="1"/>
</dbReference>
<organism>
    <name type="scientific">Shigella dysenteriae serotype 1 (strain Sd197)</name>
    <dbReference type="NCBI Taxonomy" id="300267"/>
    <lineage>
        <taxon>Bacteria</taxon>
        <taxon>Pseudomonadati</taxon>
        <taxon>Pseudomonadota</taxon>
        <taxon>Gammaproteobacteria</taxon>
        <taxon>Enterobacterales</taxon>
        <taxon>Enterobacteriaceae</taxon>
        <taxon>Shigella</taxon>
    </lineage>
</organism>
<protein>
    <recommendedName>
        <fullName evidence="1">UPF0294 protein YafD</fullName>
    </recommendedName>
</protein>
<gene>
    <name evidence="1" type="primary">yafD</name>
    <name type="ordered locus">SDY_0228</name>
</gene>
<keyword id="KW-0963">Cytoplasm</keyword>
<keyword id="KW-1185">Reference proteome</keyword>
<sequence length="266" mass="30006">MRKNTYAMRYVAGQPAERILPPGSFASIGQALPPGEPLSTEERIRILVWNIYKQQRAEWLSVLKNYGKDAHLVLLQEAQTTPELVQFATANYLAADQVPAFVLPQHPSGVMTLSAAHPVYCCPLREREPILRLAKSALVTVYPLPDTRLLMVINIHAVNFSLGVDVYSKQLLPIGDQIAHHSGPVIMAGDFNAWSRRRMNALYRFAREMSLRQVRFTDDQRRRAFGRPLDFVFYRGLNVSEASVLVTRASDHNPLLVEFSPGKPDK</sequence>
<proteinExistence type="inferred from homology"/>
<evidence type="ECO:0000255" key="1">
    <source>
        <dbReference type="HAMAP-Rule" id="MF_01119"/>
    </source>
</evidence>